<accession>Q31V17</accession>
<evidence type="ECO:0000255" key="1">
    <source>
        <dbReference type="HAMAP-Rule" id="MF_01559"/>
    </source>
</evidence>
<reference key="1">
    <citation type="journal article" date="2005" name="Nucleic Acids Res.">
        <title>Genome dynamics and diversity of Shigella species, the etiologic agents of bacillary dysentery.</title>
        <authorList>
            <person name="Yang F."/>
            <person name="Yang J."/>
            <person name="Zhang X."/>
            <person name="Chen L."/>
            <person name="Jiang Y."/>
            <person name="Yan Y."/>
            <person name="Tang X."/>
            <person name="Wang J."/>
            <person name="Xiong Z."/>
            <person name="Dong J."/>
            <person name="Xue Y."/>
            <person name="Zhu Y."/>
            <person name="Xu X."/>
            <person name="Sun L."/>
            <person name="Chen S."/>
            <person name="Nie H."/>
            <person name="Peng J."/>
            <person name="Xu J."/>
            <person name="Wang Y."/>
            <person name="Yuan Z."/>
            <person name="Wen Y."/>
            <person name="Yao Z."/>
            <person name="Shen Y."/>
            <person name="Qiang B."/>
            <person name="Hou Y."/>
            <person name="Yu J."/>
            <person name="Jin Q."/>
        </authorList>
    </citation>
    <scope>NUCLEOTIDE SEQUENCE [LARGE SCALE GENOMIC DNA]</scope>
    <source>
        <strain>Sb227</strain>
    </source>
</reference>
<gene>
    <name evidence="1" type="primary">lldD</name>
    <name type="ordered locus">SBO_3610</name>
</gene>
<feature type="chain" id="PRO_0000206348" description="L-lactate dehydrogenase">
    <location>
        <begin position="1"/>
        <end position="396"/>
    </location>
</feature>
<feature type="domain" description="FMN hydroxy acid dehydrogenase" evidence="1">
    <location>
        <begin position="1"/>
        <end position="380"/>
    </location>
</feature>
<feature type="active site" description="Proton acceptor" evidence="1">
    <location>
        <position position="275"/>
    </location>
</feature>
<feature type="binding site" evidence="1">
    <location>
        <position position="24"/>
    </location>
    <ligand>
        <name>substrate</name>
    </ligand>
</feature>
<feature type="binding site" evidence="1">
    <location>
        <position position="106"/>
    </location>
    <ligand>
        <name>FMN</name>
        <dbReference type="ChEBI" id="CHEBI:58210"/>
    </ligand>
</feature>
<feature type="binding site" evidence="1">
    <location>
        <position position="127"/>
    </location>
    <ligand>
        <name>FMN</name>
        <dbReference type="ChEBI" id="CHEBI:58210"/>
    </ligand>
</feature>
<feature type="binding site" evidence="1">
    <location>
        <position position="129"/>
    </location>
    <ligand>
        <name>substrate</name>
    </ligand>
</feature>
<feature type="binding site" evidence="1">
    <location>
        <position position="155"/>
    </location>
    <ligand>
        <name>FMN</name>
        <dbReference type="ChEBI" id="CHEBI:58210"/>
    </ligand>
</feature>
<feature type="binding site" evidence="1">
    <location>
        <position position="164"/>
    </location>
    <ligand>
        <name>substrate</name>
    </ligand>
</feature>
<feature type="binding site" evidence="1">
    <location>
        <position position="251"/>
    </location>
    <ligand>
        <name>FMN</name>
        <dbReference type="ChEBI" id="CHEBI:58210"/>
    </ligand>
</feature>
<feature type="binding site" evidence="1">
    <location>
        <position position="278"/>
    </location>
    <ligand>
        <name>substrate</name>
    </ligand>
</feature>
<feature type="binding site" evidence="1">
    <location>
        <begin position="306"/>
        <end position="330"/>
    </location>
    <ligand>
        <name>FMN</name>
        <dbReference type="ChEBI" id="CHEBI:58210"/>
    </ligand>
</feature>
<keyword id="KW-0997">Cell inner membrane</keyword>
<keyword id="KW-1003">Cell membrane</keyword>
<keyword id="KW-0285">Flavoprotein</keyword>
<keyword id="KW-0288">FMN</keyword>
<keyword id="KW-0472">Membrane</keyword>
<keyword id="KW-0560">Oxidoreductase</keyword>
<organism>
    <name type="scientific">Shigella boydii serotype 4 (strain Sb227)</name>
    <dbReference type="NCBI Taxonomy" id="300268"/>
    <lineage>
        <taxon>Bacteria</taxon>
        <taxon>Pseudomonadati</taxon>
        <taxon>Pseudomonadota</taxon>
        <taxon>Gammaproteobacteria</taxon>
        <taxon>Enterobacterales</taxon>
        <taxon>Enterobacteriaceae</taxon>
        <taxon>Shigella</taxon>
    </lineage>
</organism>
<dbReference type="EC" id="1.1.-.-" evidence="1"/>
<dbReference type="EMBL" id="CP000036">
    <property type="protein sequence ID" value="ABB68091.1"/>
    <property type="molecule type" value="Genomic_DNA"/>
</dbReference>
<dbReference type="RefSeq" id="WP_000586966.1">
    <property type="nucleotide sequence ID" value="NC_007613.1"/>
</dbReference>
<dbReference type="SMR" id="Q31V17"/>
<dbReference type="KEGG" id="sbo:SBO_3610"/>
<dbReference type="HOGENOM" id="CLU_020639_0_0_6"/>
<dbReference type="Proteomes" id="UP000007067">
    <property type="component" value="Chromosome"/>
</dbReference>
<dbReference type="GO" id="GO:0005886">
    <property type="term" value="C:plasma membrane"/>
    <property type="evidence" value="ECO:0007669"/>
    <property type="project" value="UniProtKB-SubCell"/>
</dbReference>
<dbReference type="GO" id="GO:0010181">
    <property type="term" value="F:FMN binding"/>
    <property type="evidence" value="ECO:0007669"/>
    <property type="project" value="InterPro"/>
</dbReference>
<dbReference type="GO" id="GO:0004459">
    <property type="term" value="F:L-lactate dehydrogenase activity"/>
    <property type="evidence" value="ECO:0007669"/>
    <property type="project" value="UniProtKB-UniRule"/>
</dbReference>
<dbReference type="GO" id="GO:0009060">
    <property type="term" value="P:aerobic respiration"/>
    <property type="evidence" value="ECO:0007669"/>
    <property type="project" value="TreeGrafter"/>
</dbReference>
<dbReference type="GO" id="GO:0006089">
    <property type="term" value="P:lactate metabolic process"/>
    <property type="evidence" value="ECO:0007669"/>
    <property type="project" value="UniProtKB-UniRule"/>
</dbReference>
<dbReference type="CDD" id="cd02809">
    <property type="entry name" value="alpha_hydroxyacid_oxid_FMN"/>
    <property type="match status" value="1"/>
</dbReference>
<dbReference type="FunFam" id="3.20.20.70:FF:000029">
    <property type="entry name" value="L-lactate dehydrogenase"/>
    <property type="match status" value="1"/>
</dbReference>
<dbReference type="Gene3D" id="3.20.20.70">
    <property type="entry name" value="Aldolase class I"/>
    <property type="match status" value="1"/>
</dbReference>
<dbReference type="HAMAP" id="MF_01559">
    <property type="entry name" value="L_lact_dehydr"/>
    <property type="match status" value="1"/>
</dbReference>
<dbReference type="InterPro" id="IPR013785">
    <property type="entry name" value="Aldolase_TIM"/>
</dbReference>
<dbReference type="InterPro" id="IPR012133">
    <property type="entry name" value="Alpha-hydoxy_acid_DH_FMN"/>
</dbReference>
<dbReference type="InterPro" id="IPR000262">
    <property type="entry name" value="FMN-dep_DH"/>
</dbReference>
<dbReference type="InterPro" id="IPR037396">
    <property type="entry name" value="FMN_HAD"/>
</dbReference>
<dbReference type="InterPro" id="IPR008259">
    <property type="entry name" value="FMN_hydac_DH_AS"/>
</dbReference>
<dbReference type="InterPro" id="IPR020920">
    <property type="entry name" value="LldD"/>
</dbReference>
<dbReference type="NCBIfam" id="NF033901">
    <property type="entry name" value="L_lactate_LldD"/>
    <property type="match status" value="1"/>
</dbReference>
<dbReference type="NCBIfam" id="NF008398">
    <property type="entry name" value="PRK11197.1"/>
    <property type="match status" value="1"/>
</dbReference>
<dbReference type="PANTHER" id="PTHR10578:SF85">
    <property type="entry name" value="L-LACTATE DEHYDROGENASE"/>
    <property type="match status" value="1"/>
</dbReference>
<dbReference type="PANTHER" id="PTHR10578">
    <property type="entry name" value="S -2-HYDROXY-ACID OXIDASE-RELATED"/>
    <property type="match status" value="1"/>
</dbReference>
<dbReference type="Pfam" id="PF01070">
    <property type="entry name" value="FMN_dh"/>
    <property type="match status" value="1"/>
</dbReference>
<dbReference type="PIRSF" id="PIRSF000138">
    <property type="entry name" value="Al-hdrx_acd_dh"/>
    <property type="match status" value="1"/>
</dbReference>
<dbReference type="SUPFAM" id="SSF51395">
    <property type="entry name" value="FMN-linked oxidoreductases"/>
    <property type="match status" value="1"/>
</dbReference>
<dbReference type="PROSITE" id="PS00557">
    <property type="entry name" value="FMN_HYDROXY_ACID_DH_1"/>
    <property type="match status" value="1"/>
</dbReference>
<dbReference type="PROSITE" id="PS51349">
    <property type="entry name" value="FMN_HYDROXY_ACID_DH_2"/>
    <property type="match status" value="1"/>
</dbReference>
<proteinExistence type="inferred from homology"/>
<comment type="function">
    <text evidence="1">Catalyzes the conversion of L-lactate to pyruvate. Is coupled to the respiratory chain.</text>
</comment>
<comment type="catalytic activity">
    <reaction evidence="1">
        <text>(S)-lactate + A = pyruvate + AH2</text>
        <dbReference type="Rhea" id="RHEA:45816"/>
        <dbReference type="ChEBI" id="CHEBI:13193"/>
        <dbReference type="ChEBI" id="CHEBI:15361"/>
        <dbReference type="ChEBI" id="CHEBI:16651"/>
        <dbReference type="ChEBI" id="CHEBI:17499"/>
    </reaction>
</comment>
<comment type="cofactor">
    <cofactor evidence="1">
        <name>FMN</name>
        <dbReference type="ChEBI" id="CHEBI:58210"/>
    </cofactor>
</comment>
<comment type="subcellular location">
    <subcellularLocation>
        <location evidence="1">Cell inner membrane</location>
        <topology evidence="1">Peripheral membrane protein</topology>
    </subcellularLocation>
</comment>
<comment type="similarity">
    <text evidence="1">Belongs to the FMN-dependent alpha-hydroxy acid dehydrogenase family.</text>
</comment>
<protein>
    <recommendedName>
        <fullName evidence="1">L-lactate dehydrogenase</fullName>
        <ecNumber evidence="1">1.1.-.-</ecNumber>
    </recommendedName>
</protein>
<sequence>MIISAASDYRAAAQRILPPFLFHYMDGGAYSEYTLRRNVEDLSEVALRQRILKNMSDLSLETTLFNEKLSMPVALAPVGLCGMYARRGEVQAAKAADTHGIPFTLSTVSVCPIEEVAPAIKRPMWFQLYVLRDRGFMRNALERAKAAGCSTLVFTVDMPTPGARYRDAHSGMSGPNAAMRRYLQAVTHPQWAWDVGLNGRPHDLGNISAYLGKPTGLEDYIGWLGNNFDPSISWKDLEWIRDFWDGPMVIKGILDPEDARDAVRFGADGIVVSNHGGRQLDGVLSSARALPAIADAVKGDIAILADSGIRNGLDVVRMIALGADTVLLGRAFLYALATAGQAGVANLLNLIEKEMKVAMTLTGAKSISEITQDSLVQGLGKELPAALAPMAKGNAA</sequence>
<name>LLDD_SHIBS</name>